<name>PURT_SHESA</name>
<keyword id="KW-0067">ATP-binding</keyword>
<keyword id="KW-0436">Ligase</keyword>
<keyword id="KW-0460">Magnesium</keyword>
<keyword id="KW-0479">Metal-binding</keyword>
<keyword id="KW-0547">Nucleotide-binding</keyword>
<keyword id="KW-0658">Purine biosynthesis</keyword>
<reference key="1">
    <citation type="submission" date="2006-09" db="EMBL/GenBank/DDBJ databases">
        <title>Complete sequence of chromosome 1 of Shewanella sp. ANA-3.</title>
        <authorList>
            <person name="Copeland A."/>
            <person name="Lucas S."/>
            <person name="Lapidus A."/>
            <person name="Barry K."/>
            <person name="Detter J.C."/>
            <person name="Glavina del Rio T."/>
            <person name="Hammon N."/>
            <person name="Israni S."/>
            <person name="Dalin E."/>
            <person name="Tice H."/>
            <person name="Pitluck S."/>
            <person name="Chertkov O."/>
            <person name="Brettin T."/>
            <person name="Bruce D."/>
            <person name="Han C."/>
            <person name="Tapia R."/>
            <person name="Gilna P."/>
            <person name="Schmutz J."/>
            <person name="Larimer F."/>
            <person name="Land M."/>
            <person name="Hauser L."/>
            <person name="Kyrpides N."/>
            <person name="Kim E."/>
            <person name="Newman D."/>
            <person name="Salticov C."/>
            <person name="Konstantinidis K."/>
            <person name="Klappenback J."/>
            <person name="Tiedje J."/>
            <person name="Richardson P."/>
        </authorList>
    </citation>
    <scope>NUCLEOTIDE SEQUENCE [LARGE SCALE GENOMIC DNA]</scope>
    <source>
        <strain>ANA-3</strain>
    </source>
</reference>
<gene>
    <name evidence="1" type="primary">purT</name>
    <name type="ordered locus">Shewana3_3197</name>
</gene>
<sequence>MIGTPYTEGARRAMLLGCGELGKEVAIELQRLGVEVIGVDRYPNAPAMQIAHRSHVINMLDAKALRAIIELEKPHLVIPEIEAIATQTLVEMETEGLNVVPTARATQLTMDREGIRRLAAETLGLPTSPYFFCDTETEFNQAIGKIGVPCVVKPVMSSSGKGQSVIRDAAQSTKAWQYAQEGGRAGGGRVIVEGFIPFDYEITLLTISAVNGIHFCAPIGHRQEDGDYRESWQPQAMSADVLAKSQAIASKVVEALGGYGLFGVELFVKGSDVYFSEVSPRPHDTGLVTLISQDLSEFALHVRAILGLPIPNIHQHGPSASAVVLVEGKSKNIRYQGLADALAAENTQLRLFAKPEIDGRRRLGVALARDKDIESAVNKALDSASKVKVIF</sequence>
<proteinExistence type="inferred from homology"/>
<dbReference type="EC" id="6.3.1.21" evidence="1"/>
<dbReference type="EMBL" id="CP000469">
    <property type="protein sequence ID" value="ABK49421.1"/>
    <property type="molecule type" value="Genomic_DNA"/>
</dbReference>
<dbReference type="RefSeq" id="WP_011718018.1">
    <property type="nucleotide sequence ID" value="NC_008577.1"/>
</dbReference>
<dbReference type="SMR" id="A0L052"/>
<dbReference type="STRING" id="94122.Shewana3_3197"/>
<dbReference type="KEGG" id="shn:Shewana3_3197"/>
<dbReference type="eggNOG" id="COG0027">
    <property type="taxonomic scope" value="Bacteria"/>
</dbReference>
<dbReference type="HOGENOM" id="CLU_011534_1_3_6"/>
<dbReference type="OrthoDB" id="9804625at2"/>
<dbReference type="UniPathway" id="UPA00074">
    <property type="reaction ID" value="UER00127"/>
</dbReference>
<dbReference type="Proteomes" id="UP000002589">
    <property type="component" value="Chromosome"/>
</dbReference>
<dbReference type="GO" id="GO:0005829">
    <property type="term" value="C:cytosol"/>
    <property type="evidence" value="ECO:0007669"/>
    <property type="project" value="TreeGrafter"/>
</dbReference>
<dbReference type="GO" id="GO:0005524">
    <property type="term" value="F:ATP binding"/>
    <property type="evidence" value="ECO:0007669"/>
    <property type="project" value="UniProtKB-UniRule"/>
</dbReference>
<dbReference type="GO" id="GO:0000287">
    <property type="term" value="F:magnesium ion binding"/>
    <property type="evidence" value="ECO:0007669"/>
    <property type="project" value="InterPro"/>
</dbReference>
<dbReference type="GO" id="GO:0043815">
    <property type="term" value="F:phosphoribosylglycinamide formyltransferase 2 activity"/>
    <property type="evidence" value="ECO:0007669"/>
    <property type="project" value="UniProtKB-UniRule"/>
</dbReference>
<dbReference type="GO" id="GO:0004644">
    <property type="term" value="F:phosphoribosylglycinamide formyltransferase activity"/>
    <property type="evidence" value="ECO:0007669"/>
    <property type="project" value="InterPro"/>
</dbReference>
<dbReference type="GO" id="GO:0006189">
    <property type="term" value="P:'de novo' IMP biosynthetic process"/>
    <property type="evidence" value="ECO:0007669"/>
    <property type="project" value="UniProtKB-UniRule"/>
</dbReference>
<dbReference type="FunFam" id="3.30.1490.20:FF:000013">
    <property type="entry name" value="Formate-dependent phosphoribosylglycinamide formyltransferase"/>
    <property type="match status" value="1"/>
</dbReference>
<dbReference type="FunFam" id="3.30.470.20:FF:000027">
    <property type="entry name" value="Formate-dependent phosphoribosylglycinamide formyltransferase"/>
    <property type="match status" value="1"/>
</dbReference>
<dbReference type="FunFam" id="3.40.50.20:FF:000007">
    <property type="entry name" value="Formate-dependent phosphoribosylglycinamide formyltransferase"/>
    <property type="match status" value="1"/>
</dbReference>
<dbReference type="Gene3D" id="3.40.50.20">
    <property type="match status" value="1"/>
</dbReference>
<dbReference type="Gene3D" id="3.30.1490.20">
    <property type="entry name" value="ATP-grasp fold, A domain"/>
    <property type="match status" value="1"/>
</dbReference>
<dbReference type="Gene3D" id="3.30.470.20">
    <property type="entry name" value="ATP-grasp fold, B domain"/>
    <property type="match status" value="1"/>
</dbReference>
<dbReference type="HAMAP" id="MF_01643">
    <property type="entry name" value="PurT"/>
    <property type="match status" value="1"/>
</dbReference>
<dbReference type="InterPro" id="IPR011761">
    <property type="entry name" value="ATP-grasp"/>
</dbReference>
<dbReference type="InterPro" id="IPR003135">
    <property type="entry name" value="ATP-grasp_carboxylate-amine"/>
</dbReference>
<dbReference type="InterPro" id="IPR013815">
    <property type="entry name" value="ATP_grasp_subdomain_1"/>
</dbReference>
<dbReference type="InterPro" id="IPR016185">
    <property type="entry name" value="PreATP-grasp_dom_sf"/>
</dbReference>
<dbReference type="InterPro" id="IPR005862">
    <property type="entry name" value="PurT"/>
</dbReference>
<dbReference type="InterPro" id="IPR054350">
    <property type="entry name" value="PurT/PurK_preATP-grasp"/>
</dbReference>
<dbReference type="InterPro" id="IPR048740">
    <property type="entry name" value="PurT_C"/>
</dbReference>
<dbReference type="InterPro" id="IPR011054">
    <property type="entry name" value="Rudment_hybrid_motif"/>
</dbReference>
<dbReference type="NCBIfam" id="NF006766">
    <property type="entry name" value="PRK09288.1"/>
    <property type="match status" value="1"/>
</dbReference>
<dbReference type="NCBIfam" id="TIGR01142">
    <property type="entry name" value="purT"/>
    <property type="match status" value="1"/>
</dbReference>
<dbReference type="PANTHER" id="PTHR43055">
    <property type="entry name" value="FORMATE-DEPENDENT PHOSPHORIBOSYLGLYCINAMIDE FORMYLTRANSFERASE"/>
    <property type="match status" value="1"/>
</dbReference>
<dbReference type="PANTHER" id="PTHR43055:SF1">
    <property type="entry name" value="FORMATE-DEPENDENT PHOSPHORIBOSYLGLYCINAMIDE FORMYLTRANSFERASE"/>
    <property type="match status" value="1"/>
</dbReference>
<dbReference type="Pfam" id="PF02222">
    <property type="entry name" value="ATP-grasp"/>
    <property type="match status" value="1"/>
</dbReference>
<dbReference type="Pfam" id="PF21244">
    <property type="entry name" value="PurT_C"/>
    <property type="match status" value="1"/>
</dbReference>
<dbReference type="Pfam" id="PF22660">
    <property type="entry name" value="RS_preATP-grasp-like"/>
    <property type="match status" value="1"/>
</dbReference>
<dbReference type="SUPFAM" id="SSF56059">
    <property type="entry name" value="Glutathione synthetase ATP-binding domain-like"/>
    <property type="match status" value="1"/>
</dbReference>
<dbReference type="SUPFAM" id="SSF52440">
    <property type="entry name" value="PreATP-grasp domain"/>
    <property type="match status" value="1"/>
</dbReference>
<dbReference type="SUPFAM" id="SSF51246">
    <property type="entry name" value="Rudiment single hybrid motif"/>
    <property type="match status" value="1"/>
</dbReference>
<dbReference type="PROSITE" id="PS50975">
    <property type="entry name" value="ATP_GRASP"/>
    <property type="match status" value="1"/>
</dbReference>
<feature type="chain" id="PRO_0000319234" description="Formate-dependent phosphoribosylglycinamide formyltransferase">
    <location>
        <begin position="1"/>
        <end position="391"/>
    </location>
</feature>
<feature type="domain" description="ATP-grasp" evidence="1">
    <location>
        <begin position="117"/>
        <end position="306"/>
    </location>
</feature>
<feature type="binding site" evidence="1">
    <location>
        <begin position="20"/>
        <end position="21"/>
    </location>
    <ligand>
        <name>N(1)-(5-phospho-beta-D-ribosyl)glycinamide</name>
        <dbReference type="ChEBI" id="CHEBI:143788"/>
    </ligand>
</feature>
<feature type="binding site" evidence="1">
    <location>
        <position position="80"/>
    </location>
    <ligand>
        <name>N(1)-(5-phospho-beta-D-ribosyl)glycinamide</name>
        <dbReference type="ChEBI" id="CHEBI:143788"/>
    </ligand>
</feature>
<feature type="binding site" evidence="1">
    <location>
        <position position="112"/>
    </location>
    <ligand>
        <name>ATP</name>
        <dbReference type="ChEBI" id="CHEBI:30616"/>
    </ligand>
</feature>
<feature type="binding site" evidence="1">
    <location>
        <position position="153"/>
    </location>
    <ligand>
        <name>ATP</name>
        <dbReference type="ChEBI" id="CHEBI:30616"/>
    </ligand>
</feature>
<feature type="binding site" evidence="1">
    <location>
        <begin position="158"/>
        <end position="163"/>
    </location>
    <ligand>
        <name>ATP</name>
        <dbReference type="ChEBI" id="CHEBI:30616"/>
    </ligand>
</feature>
<feature type="binding site" evidence="1">
    <location>
        <begin position="193"/>
        <end position="196"/>
    </location>
    <ligand>
        <name>ATP</name>
        <dbReference type="ChEBI" id="CHEBI:30616"/>
    </ligand>
</feature>
<feature type="binding site" evidence="1">
    <location>
        <position position="201"/>
    </location>
    <ligand>
        <name>ATP</name>
        <dbReference type="ChEBI" id="CHEBI:30616"/>
    </ligand>
</feature>
<feature type="binding site" evidence="1">
    <location>
        <position position="265"/>
    </location>
    <ligand>
        <name>Mg(2+)</name>
        <dbReference type="ChEBI" id="CHEBI:18420"/>
    </ligand>
</feature>
<feature type="binding site" evidence="1">
    <location>
        <position position="277"/>
    </location>
    <ligand>
        <name>Mg(2+)</name>
        <dbReference type="ChEBI" id="CHEBI:18420"/>
    </ligand>
</feature>
<feature type="binding site" evidence="1">
    <location>
        <position position="284"/>
    </location>
    <ligand>
        <name>N(1)-(5-phospho-beta-D-ribosyl)glycinamide</name>
        <dbReference type="ChEBI" id="CHEBI:143788"/>
    </ligand>
</feature>
<feature type="binding site" evidence="1">
    <location>
        <position position="354"/>
    </location>
    <ligand>
        <name>N(1)-(5-phospho-beta-D-ribosyl)glycinamide</name>
        <dbReference type="ChEBI" id="CHEBI:143788"/>
    </ligand>
</feature>
<feature type="binding site" evidence="1">
    <location>
        <begin position="361"/>
        <end position="362"/>
    </location>
    <ligand>
        <name>N(1)-(5-phospho-beta-D-ribosyl)glycinamide</name>
        <dbReference type="ChEBI" id="CHEBI:143788"/>
    </ligand>
</feature>
<comment type="function">
    <text evidence="1">Involved in the de novo purine biosynthesis. Catalyzes the transfer of formate to 5-phospho-ribosyl-glycinamide (GAR), producing 5-phospho-ribosyl-N-formylglycinamide (FGAR). Formate is provided by PurU via hydrolysis of 10-formyl-tetrahydrofolate.</text>
</comment>
<comment type="catalytic activity">
    <reaction evidence="1">
        <text>N(1)-(5-phospho-beta-D-ribosyl)glycinamide + formate + ATP = N(2)-formyl-N(1)-(5-phospho-beta-D-ribosyl)glycinamide + ADP + phosphate + H(+)</text>
        <dbReference type="Rhea" id="RHEA:24829"/>
        <dbReference type="ChEBI" id="CHEBI:15378"/>
        <dbReference type="ChEBI" id="CHEBI:15740"/>
        <dbReference type="ChEBI" id="CHEBI:30616"/>
        <dbReference type="ChEBI" id="CHEBI:43474"/>
        <dbReference type="ChEBI" id="CHEBI:143788"/>
        <dbReference type="ChEBI" id="CHEBI:147286"/>
        <dbReference type="ChEBI" id="CHEBI:456216"/>
        <dbReference type="EC" id="6.3.1.21"/>
    </reaction>
    <physiologicalReaction direction="left-to-right" evidence="1">
        <dbReference type="Rhea" id="RHEA:24830"/>
    </physiologicalReaction>
</comment>
<comment type="pathway">
    <text evidence="1">Purine metabolism; IMP biosynthesis via de novo pathway; N(2)-formyl-N(1)-(5-phospho-D-ribosyl)glycinamide from N(1)-(5-phospho-D-ribosyl)glycinamide (formate route): step 1/1.</text>
</comment>
<comment type="subunit">
    <text evidence="1">Homodimer.</text>
</comment>
<comment type="similarity">
    <text evidence="1">Belongs to the PurK/PurT family.</text>
</comment>
<accession>A0L052</accession>
<organism>
    <name type="scientific">Shewanella sp. (strain ANA-3)</name>
    <dbReference type="NCBI Taxonomy" id="94122"/>
    <lineage>
        <taxon>Bacteria</taxon>
        <taxon>Pseudomonadati</taxon>
        <taxon>Pseudomonadota</taxon>
        <taxon>Gammaproteobacteria</taxon>
        <taxon>Alteromonadales</taxon>
        <taxon>Shewanellaceae</taxon>
        <taxon>Shewanella</taxon>
    </lineage>
</organism>
<protein>
    <recommendedName>
        <fullName evidence="1">Formate-dependent phosphoribosylglycinamide formyltransferase</fullName>
        <ecNumber evidence="1">6.3.1.21</ecNumber>
    </recommendedName>
    <alternativeName>
        <fullName evidence="1">5'-phosphoribosylglycinamide transformylase 2</fullName>
    </alternativeName>
    <alternativeName>
        <fullName evidence="1">Formate-dependent GAR transformylase</fullName>
    </alternativeName>
    <alternativeName>
        <fullName evidence="1">GAR transformylase 2</fullName>
        <shortName evidence="1">GART 2</shortName>
    </alternativeName>
    <alternativeName>
        <fullName evidence="1">Non-folate glycinamide ribonucleotide transformylase</fullName>
    </alternativeName>
    <alternativeName>
        <fullName evidence="1">Phosphoribosylglycinamide formyltransferase 2</fullName>
    </alternativeName>
</protein>
<evidence type="ECO:0000255" key="1">
    <source>
        <dbReference type="HAMAP-Rule" id="MF_01643"/>
    </source>
</evidence>